<comment type="function">
    <text evidence="3">Essential counter-regulatory carboxypeptidase of the renin-angiotensin hormone system that is a critical regulator of blood volume, systemic vascular resistance, and thus cardiovascular homeostasis. Converts angiotensin I to angiotensin 1-9, a nine-amino acid peptide with anti-hypertrophic effects in cardiomyocytes, and angiotensin II to angiotensin 1-7, which then acts as a beneficial vasodilator and anti-proliferation agent, counterbalancing the actions of the vasoconstrictor angiotensin II. Also removes the C-terminal residue from three other vasoactive peptides, neurotensin, kinetensin, and des-Arg bradykinin, but is not active on bradykinin. Also cleaves other biological peptides, such as apelins, casomorphins and dynorphin A. Plays an important role in amino acid transport by acting as binding partner of amino acid transporter SLC6A19 in intestine, regulating trafficking, expression on the cell surface, and its catalytic activity.</text>
</comment>
<comment type="catalytic activity">
    <reaction evidence="3">
        <text>angiotensin II + H2O = angiotensin-(1-7) + L-phenylalanine</text>
        <dbReference type="Rhea" id="RHEA:26554"/>
        <dbReference type="ChEBI" id="CHEBI:15377"/>
        <dbReference type="ChEBI" id="CHEBI:58095"/>
        <dbReference type="ChEBI" id="CHEBI:58506"/>
        <dbReference type="ChEBI" id="CHEBI:58922"/>
        <dbReference type="EC" id="3.4.17.23"/>
    </reaction>
    <physiologicalReaction direction="left-to-right" evidence="3">
        <dbReference type="Rhea" id="RHEA:26555"/>
    </physiologicalReaction>
</comment>
<comment type="catalytic activity">
    <reaction evidence="3">
        <text>angiotensin I + H2O = angiotensin-(1-9) + L-leucine</text>
        <dbReference type="Rhea" id="RHEA:63532"/>
        <dbReference type="ChEBI" id="CHEBI:15377"/>
        <dbReference type="ChEBI" id="CHEBI:57427"/>
        <dbReference type="ChEBI" id="CHEBI:147350"/>
        <dbReference type="ChEBI" id="CHEBI:147351"/>
    </reaction>
    <physiologicalReaction direction="left-to-right" evidence="3">
        <dbReference type="Rhea" id="RHEA:63533"/>
    </physiologicalReaction>
</comment>
<comment type="catalytic activity">
    <reaction evidence="3">
        <text>bradykinin(1-8) + H2O = bradykinin(1-7) + L-phenylalanine</text>
        <dbReference type="Rhea" id="RHEA:63536"/>
        <dbReference type="ChEBI" id="CHEBI:15377"/>
        <dbReference type="ChEBI" id="CHEBI:58095"/>
        <dbReference type="ChEBI" id="CHEBI:133069"/>
        <dbReference type="ChEBI" id="CHEBI:147352"/>
    </reaction>
    <physiologicalReaction direction="left-to-right" evidence="3">
        <dbReference type="Rhea" id="RHEA:63537"/>
    </physiologicalReaction>
</comment>
<comment type="catalytic activity">
    <reaction evidence="3">
        <text>neurotensin + H2O = neurotensin-(1-12) + L-leucine</text>
        <dbReference type="Rhea" id="RHEA:63540"/>
        <dbReference type="ChEBI" id="CHEBI:15377"/>
        <dbReference type="ChEBI" id="CHEBI:57427"/>
        <dbReference type="ChEBI" id="CHEBI:147362"/>
        <dbReference type="ChEBI" id="CHEBI:147363"/>
    </reaction>
    <physiologicalReaction direction="left-to-right" evidence="3">
        <dbReference type="Rhea" id="RHEA:63541"/>
    </physiologicalReaction>
</comment>
<comment type="catalytic activity">
    <reaction evidence="3">
        <text>kinetensin + H2O = kinetensin-(1-8) + L-leucine</text>
        <dbReference type="Rhea" id="RHEA:63544"/>
        <dbReference type="ChEBI" id="CHEBI:15377"/>
        <dbReference type="ChEBI" id="CHEBI:57427"/>
        <dbReference type="ChEBI" id="CHEBI:147364"/>
        <dbReference type="ChEBI" id="CHEBI:147365"/>
    </reaction>
    <physiologicalReaction direction="left-to-right" evidence="3">
        <dbReference type="Rhea" id="RHEA:63545"/>
    </physiologicalReaction>
</comment>
<comment type="catalytic activity">
    <reaction evidence="3">
        <text>dynorphin A-(1-13) + H2O = dynorphin A-(1-12) + L-lysine</text>
        <dbReference type="Rhea" id="RHEA:63556"/>
        <dbReference type="ChEBI" id="CHEBI:15377"/>
        <dbReference type="ChEBI" id="CHEBI:32551"/>
        <dbReference type="ChEBI" id="CHEBI:147381"/>
        <dbReference type="ChEBI" id="CHEBI:147383"/>
    </reaction>
    <physiologicalReaction direction="left-to-right" evidence="3">
        <dbReference type="Rhea" id="RHEA:63557"/>
    </physiologicalReaction>
</comment>
<comment type="catalytic activity">
    <reaction evidence="3">
        <text>apelin-13 + H2O = apelin-12 + L-phenylalanine</text>
        <dbReference type="Rhea" id="RHEA:63564"/>
        <dbReference type="ChEBI" id="CHEBI:15377"/>
        <dbReference type="ChEBI" id="CHEBI:58095"/>
        <dbReference type="ChEBI" id="CHEBI:147395"/>
        <dbReference type="ChEBI" id="CHEBI:147396"/>
    </reaction>
    <physiologicalReaction direction="left-to-right" evidence="3">
        <dbReference type="Rhea" id="RHEA:63565"/>
    </physiologicalReaction>
</comment>
<comment type="catalytic activity">
    <reaction evidence="3">
        <text>[Pyr1]apelin-13 + H2O = [Pyr1]apelin-12 + L-phenylalanine</text>
        <dbReference type="Rhea" id="RHEA:63604"/>
        <dbReference type="ChEBI" id="CHEBI:15377"/>
        <dbReference type="ChEBI" id="CHEBI:58095"/>
        <dbReference type="ChEBI" id="CHEBI:147415"/>
        <dbReference type="ChEBI" id="CHEBI:147416"/>
    </reaction>
    <physiologicalReaction direction="left-to-right" evidence="3">
        <dbReference type="Rhea" id="RHEA:63605"/>
    </physiologicalReaction>
</comment>
<comment type="catalytic activity">
    <reaction evidence="3">
        <text>apelin-17 + H2O = apelin-16 + L-phenylalanine</text>
        <dbReference type="Rhea" id="RHEA:63608"/>
        <dbReference type="ChEBI" id="CHEBI:15377"/>
        <dbReference type="ChEBI" id="CHEBI:58095"/>
        <dbReference type="ChEBI" id="CHEBI:147421"/>
        <dbReference type="ChEBI" id="CHEBI:147422"/>
    </reaction>
    <physiologicalReaction direction="left-to-right" evidence="3">
        <dbReference type="Rhea" id="RHEA:63609"/>
    </physiologicalReaction>
</comment>
<comment type="cofactor">
    <cofactor evidence="1">
        <name>Zn(2+)</name>
        <dbReference type="ChEBI" id="CHEBI:29105"/>
    </cofactor>
    <text evidence="1">Binds 1 zinc ion per subunit.</text>
</comment>
<comment type="cofactor">
    <cofactor evidence="1">
        <name>chloride</name>
        <dbReference type="ChEBI" id="CHEBI:17996"/>
    </cofactor>
    <text evidence="1">Binds 1 Cl(-) ion per subunit.</text>
</comment>
<comment type="subunit">
    <text evidence="2 3">Homodimer. Interacts with the catalytically active form of TMPRSS2 (By similarity). Interacts with SLC6A19; this interaction is essential for expression and function of SLC6A19 in intestine (By similarity). Interacts with ITGA5:ITGB1 (By similarity). Probably interacts (via endocytic sorting signal motif) with AP2M1; the interaction is inhibited by phosphorylation of Tyr-780 (By similarity). Interacts (via PDZ-binding motif) with NHERF1 (via PDZ domains); the interaction may enhance ACE2 membrane residence (By similarity).</text>
</comment>
<comment type="interaction">
    <interactant intactId="EBI-26998567">
        <id>Q58DD0</id>
    </interactant>
    <interactant intactId="EBI-25474821">
        <id>P0DTC2</id>
        <label>S</label>
    </interactant>
    <organismsDiffer>true</organismsDiffer>
    <experiments>3</experiments>
</comment>
<comment type="subcellular location">
    <molecule>Processed angiotensin-converting enzyme 2</molecule>
    <subcellularLocation>
        <location evidence="1">Secreted</location>
    </subcellularLocation>
</comment>
<comment type="subcellular location">
    <subcellularLocation>
        <location evidence="3">Cell membrane</location>
        <topology evidence="4">Single-pass type I membrane protein</topology>
    </subcellularLocation>
    <subcellularLocation>
        <location evidence="2">Cytoplasm</location>
    </subcellularLocation>
    <subcellularLocation>
        <location evidence="3">Cell projection</location>
        <location evidence="3">Cilium</location>
    </subcellularLocation>
    <subcellularLocation>
        <location evidence="3">Apical cell membrane</location>
    </subcellularLocation>
    <text evidence="2">Detected in both cell membrane and cytoplasm in neurons.</text>
</comment>
<comment type="domain">
    <text evidence="3">The cytoplasmic tail contains several linear motifs such as LIR, PDZ-binding, PTB and endocytic sorting signal motifs that would allow interaction with proteins that mediate endocytic trafficking and autophagy.</text>
</comment>
<comment type="PTM">
    <text evidence="1">Proteolytic cleavage by ADAM17 generates a secreted form. Also cleaved by serine proteases: TMPRSS2, TMPRSS11D and HPN/TMPRSS1 (By similarity).</text>
</comment>
<comment type="PTM">
    <text evidence="3">Phosphorylated. Phosphorylation at Tyr-780 probably inhibits interaction with AP2M1 and enables interactions with proteins containing SH2 domains.</text>
</comment>
<comment type="PTM">
    <text evidence="3">Ubiquitinated. Ubiquitinated on Lys-787 via 'Lys-48'-linked ubiquitin. 'Lys-48'-linked deubiquitinated by USP50 on the Lys-787; leading to its stabilization.</text>
</comment>
<comment type="similarity">
    <text evidence="8">Belongs to the peptidase M2 family.</text>
</comment>
<sequence length="804" mass="93067">MTGSFWLLLSLVAVTAAQSTTEEQAKTFLEKFNHEAEDLSYQSSLASWNYNTNITDENVQKMNEARAKWSAFYEEQSRMAKTYSLEEIQNLTLKRQLKALQHSGTSALSAEKSKRLNTILNKMSTIYSTGKVLDPNTQECLALEPGLDDIMENSRDYNRRLWAWEGWRAEVGKQLRPLYEEYVVLENEMARANNYEDYGDYWRGDYEVTGAGDYDYSRDQLMKDVERTFAEIKPLYEQLHAYVRAKLMHTYPSYISPTGCLPAHLLGDMWGRFWTNLYSLTVPFEHKPSIDVTEKMENQSWDAERIFKEAEKFFVSISLPYMTQGFWDNSMLTEPGDGRKVVCHPTAWDLGKGDFRIKMCTKVTMDDFLTAHHEMGHIQYDMAYAAQPYLLRNGANEGFHEAVGEIMSLSAATPHYLKALGLLAPDFHEDNETEINFLLKQALTIVGTLPFTYMLEKWRWMVFKGEIPKQQWMEKWWEMKREIVGVVEPLPHDETYCDPACLFHVAEDYSFIRYYTRTIYQFQFHEALCKTAKHEGALFKCDISNSTEAGQRLLQMLRLGKSEPWTLALENIVGIKTMDVKPLLNYFEPLFTWLKEQNRNSFVGWSTEWTPYSDQSIKVRISLKSALGENAYEWNDNEMYLFQSSVAYAMRKYFSEARNETVLFGEDNVWVSDKKPRISFKFFVTSPNNVSDIIPRTEVENAIRLSRDRINDVFQLDDNSLEFLGIQPTLGPPYEPPVTIWLIIFGVVMGVVVIGIVVLIFTGIRNRRKKNQASSEENPYGSVDLNKGENNSGFQNIDDVQTSL</sequence>
<reference key="1">
    <citation type="journal article" date="2005" name="BMC Genomics">
        <title>Characterization of 954 bovine full-CDS cDNA sequences.</title>
        <authorList>
            <person name="Harhay G.P."/>
            <person name="Sonstegard T.S."/>
            <person name="Keele J.W."/>
            <person name="Heaton M.P."/>
            <person name="Clawson M.L."/>
            <person name="Snelling W.M."/>
            <person name="Wiedmann R.T."/>
            <person name="Van Tassell C.P."/>
            <person name="Smith T.P.L."/>
        </authorList>
    </citation>
    <scope>NUCLEOTIDE SEQUENCE [LARGE SCALE MRNA]</scope>
</reference>
<evidence type="ECO:0000250" key="1"/>
<evidence type="ECO:0000250" key="2">
    <source>
        <dbReference type="UniProtKB" id="Q8R0I0"/>
    </source>
</evidence>
<evidence type="ECO:0000250" key="3">
    <source>
        <dbReference type="UniProtKB" id="Q9BYF1"/>
    </source>
</evidence>
<evidence type="ECO:0000255" key="4"/>
<evidence type="ECO:0000255" key="5">
    <source>
        <dbReference type="PROSITE-ProRule" id="PRU01354"/>
    </source>
</evidence>
<evidence type="ECO:0000255" key="6">
    <source>
        <dbReference type="PROSITE-ProRule" id="PRU01355"/>
    </source>
</evidence>
<evidence type="ECO:0000256" key="7">
    <source>
        <dbReference type="SAM" id="MobiDB-lite"/>
    </source>
</evidence>
<evidence type="ECO:0000305" key="8"/>
<evidence type="ECO:0007829" key="9">
    <source>
        <dbReference type="PDB" id="8XZ9"/>
    </source>
</evidence>
<name>ACE2_BOVIN</name>
<gene>
    <name type="primary">ACE2</name>
</gene>
<feature type="signal peptide" evidence="4">
    <location>
        <begin position="1"/>
        <end position="17"/>
    </location>
</feature>
<feature type="chain" id="PRO_0000028568" description="Angiotensin-converting enzyme 2">
    <location>
        <begin position="18"/>
        <end position="804"/>
    </location>
</feature>
<feature type="chain" id="PRO_0000292266" description="Processed angiotensin-converting enzyme 2">
    <location>
        <begin position="18"/>
        <end position="707"/>
    </location>
</feature>
<feature type="topological domain" description="Extracellular" evidence="4">
    <location>
        <begin position="18"/>
        <end position="739"/>
    </location>
</feature>
<feature type="transmembrane region" description="Helical" evidence="5">
    <location>
        <begin position="740"/>
        <end position="760"/>
    </location>
</feature>
<feature type="topological domain" description="Cytoplasmic" evidence="4">
    <location>
        <begin position="761"/>
        <end position="804"/>
    </location>
</feature>
<feature type="domain" description="Peptidase M2" evidence="6">
    <location>
        <begin position="19"/>
        <end position="606"/>
    </location>
</feature>
<feature type="domain" description="Collectrin-like" evidence="5">
    <location>
        <begin position="613"/>
        <end position="804"/>
    </location>
</feature>
<feature type="region of interest" description="Essential for cleavage by ADAM17" evidence="1">
    <location>
        <begin position="651"/>
        <end position="658"/>
    </location>
</feature>
<feature type="region of interest" description="Essential for cleavage by TMPRSS11D and TMPRSS2" evidence="1">
    <location>
        <begin position="696"/>
        <end position="715"/>
    </location>
</feature>
<feature type="region of interest" description="Disordered" evidence="7">
    <location>
        <begin position="771"/>
        <end position="804"/>
    </location>
</feature>
<feature type="short sequence motif" description="LIR" evidence="3">
    <location>
        <begin position="777"/>
        <end position="785"/>
    </location>
</feature>
<feature type="short sequence motif" description="SH2-binding" evidence="3">
    <location>
        <begin position="780"/>
        <end position="784"/>
    </location>
</feature>
<feature type="short sequence motif" description="Endocytic sorting signal" evidence="3">
    <location>
        <begin position="780"/>
        <end position="783"/>
    </location>
</feature>
<feature type="short sequence motif" description="PTB" evidence="3">
    <location>
        <begin position="791"/>
        <end position="794"/>
    </location>
</feature>
<feature type="short sequence motif" description="PDZ-binding" evidence="3">
    <location>
        <begin position="802"/>
        <end position="804"/>
    </location>
</feature>
<feature type="compositionally biased region" description="Polar residues" evidence="7">
    <location>
        <begin position="788"/>
        <end position="804"/>
    </location>
</feature>
<feature type="active site" description="Proton acceptor" evidence="6">
    <location>
        <position position="374"/>
    </location>
</feature>
<feature type="active site" description="Proton donor" evidence="6">
    <location>
        <position position="504"/>
    </location>
</feature>
<feature type="binding site" evidence="6">
    <location>
        <position position="168"/>
    </location>
    <ligand>
        <name>chloride</name>
        <dbReference type="ChEBI" id="CHEBI:17996"/>
    </ligand>
</feature>
<feature type="binding site" evidence="3">
    <location>
        <position position="272"/>
    </location>
    <ligand>
        <name>substrate</name>
    </ligand>
</feature>
<feature type="binding site" evidence="3">
    <location>
        <begin position="344"/>
        <end position="345"/>
    </location>
    <ligand>
        <name>substrate</name>
    </ligand>
</feature>
<feature type="binding site" evidence="6">
    <location>
        <position position="373"/>
    </location>
    <ligand>
        <name>Zn(2+)</name>
        <dbReference type="ChEBI" id="CHEBI:29105"/>
        <note>catalytic</note>
    </ligand>
</feature>
<feature type="binding site" evidence="6">
    <location>
        <position position="377"/>
    </location>
    <ligand>
        <name>Zn(2+)</name>
        <dbReference type="ChEBI" id="CHEBI:29105"/>
        <note>catalytic</note>
    </ligand>
</feature>
<feature type="binding site" evidence="6">
    <location>
        <position position="401"/>
    </location>
    <ligand>
        <name>Zn(2+)</name>
        <dbReference type="ChEBI" id="CHEBI:29105"/>
        <note>catalytic</note>
    </ligand>
</feature>
<feature type="binding site" evidence="6">
    <location>
        <position position="476"/>
    </location>
    <ligand>
        <name>chloride</name>
        <dbReference type="ChEBI" id="CHEBI:17996"/>
    </ligand>
</feature>
<feature type="binding site" evidence="6">
    <location>
        <position position="480"/>
    </location>
    <ligand>
        <name>chloride</name>
        <dbReference type="ChEBI" id="CHEBI:17996"/>
    </ligand>
</feature>
<feature type="binding site" evidence="3">
    <location>
        <position position="514"/>
    </location>
    <ligand>
        <name>substrate</name>
    </ligand>
</feature>
<feature type="modified residue" description="Phosphotyrosine" evidence="3">
    <location>
        <position position="780"/>
    </location>
</feature>
<feature type="modified residue" description="Phosphoserine" evidence="3">
    <location>
        <position position="782"/>
    </location>
</feature>
<feature type="glycosylation site" description="N-linked (GlcNAc...) asparagine" evidence="4">
    <location>
        <position position="53"/>
    </location>
</feature>
<feature type="glycosylation site" description="N-linked (GlcNAc...) asparagine" evidence="4">
    <location>
        <position position="90"/>
    </location>
</feature>
<feature type="glycosylation site" description="N-linked (GlcNAc...) asparagine" evidence="4">
    <location>
        <position position="298"/>
    </location>
</feature>
<feature type="glycosylation site" description="N-linked (GlcNAc...) asparagine" evidence="4">
    <location>
        <position position="431"/>
    </location>
</feature>
<feature type="glycosylation site" description="N-linked (GlcNAc...) asparagine" evidence="4">
    <location>
        <position position="545"/>
    </location>
</feature>
<feature type="glycosylation site" description="N-linked (GlcNAc...) asparagine" evidence="4">
    <location>
        <position position="659"/>
    </location>
</feature>
<feature type="glycosylation site" description="N-linked (GlcNAc...) asparagine" evidence="4">
    <location>
        <position position="689"/>
    </location>
</feature>
<feature type="disulfide bond" evidence="6">
    <location>
        <begin position="343"/>
        <end position="360"/>
    </location>
</feature>
<feature type="disulfide bond" evidence="6">
    <location>
        <begin position="529"/>
        <end position="541"/>
    </location>
</feature>
<feature type="cross-link" description="Glycyl lysine isopeptide (Lys-Gly) (interchain with G-Cter in ubiquitin)" evidence="3">
    <location>
        <position position="787"/>
    </location>
</feature>
<feature type="helix" evidence="9">
    <location>
        <begin position="21"/>
        <end position="52"/>
    </location>
</feature>
<feature type="helix" evidence="9">
    <location>
        <begin position="56"/>
        <end position="80"/>
    </location>
</feature>
<feature type="strand" evidence="9">
    <location>
        <begin position="85"/>
        <end position="87"/>
    </location>
</feature>
<feature type="helix" evidence="9">
    <location>
        <begin position="91"/>
        <end position="100"/>
    </location>
</feature>
<feature type="helix" evidence="9">
    <location>
        <begin position="104"/>
        <end position="107"/>
    </location>
</feature>
<feature type="helix" evidence="9">
    <location>
        <begin position="110"/>
        <end position="129"/>
    </location>
</feature>
<feature type="strand" evidence="9">
    <location>
        <begin position="131"/>
        <end position="133"/>
    </location>
</feature>
<feature type="strand" evidence="9">
    <location>
        <begin position="140"/>
        <end position="144"/>
    </location>
</feature>
<feature type="helix" evidence="9">
    <location>
        <begin position="147"/>
        <end position="153"/>
    </location>
</feature>
<feature type="helix" evidence="9">
    <location>
        <begin position="157"/>
        <end position="192"/>
    </location>
</feature>
<feature type="helix" evidence="9">
    <location>
        <begin position="198"/>
        <end position="203"/>
    </location>
</feature>
<feature type="helix" evidence="9">
    <location>
        <begin position="204"/>
        <end position="206"/>
    </location>
</feature>
<feature type="turn" evidence="9">
    <location>
        <begin position="212"/>
        <end position="214"/>
    </location>
</feature>
<feature type="helix" evidence="9">
    <location>
        <begin position="218"/>
        <end position="250"/>
    </location>
</feature>
<feature type="strand" evidence="9">
    <location>
        <begin position="257"/>
        <end position="259"/>
    </location>
</feature>
<feature type="helix" evidence="9">
    <location>
        <begin position="263"/>
        <end position="265"/>
    </location>
</feature>
<feature type="strand" evidence="9">
    <location>
        <begin position="266"/>
        <end position="271"/>
    </location>
</feature>
<feature type="turn" evidence="9">
    <location>
        <begin position="275"/>
        <end position="281"/>
    </location>
</feature>
<feature type="helix" evidence="9">
    <location>
        <begin position="293"/>
        <end position="299"/>
    </location>
</feature>
<feature type="helix" evidence="9">
    <location>
        <begin position="303"/>
        <end position="316"/>
    </location>
</feature>
<feature type="helix" evidence="9">
    <location>
        <begin position="324"/>
        <end position="329"/>
    </location>
</feature>
<feature type="strand" evidence="9">
    <location>
        <begin position="337"/>
        <end position="339"/>
    </location>
</feature>
<feature type="strand" evidence="9">
    <location>
        <begin position="349"/>
        <end position="351"/>
    </location>
</feature>
<feature type="helix" evidence="9">
    <location>
        <begin position="365"/>
        <end position="383"/>
    </location>
</feature>
<feature type="turn" evidence="9">
    <location>
        <begin position="384"/>
        <end position="386"/>
    </location>
</feature>
<feature type="strand" evidence="9">
    <location>
        <begin position="395"/>
        <end position="398"/>
    </location>
</feature>
<feature type="helix" evidence="9">
    <location>
        <begin position="399"/>
        <end position="412"/>
    </location>
</feature>
<feature type="helix" evidence="9">
    <location>
        <begin position="414"/>
        <end position="420"/>
    </location>
</feature>
<feature type="strand" evidence="9">
    <location>
        <begin position="421"/>
        <end position="423"/>
    </location>
</feature>
<feature type="helix" evidence="9">
    <location>
        <begin position="431"/>
        <end position="446"/>
    </location>
</feature>
<feature type="helix" evidence="9">
    <location>
        <begin position="448"/>
        <end position="464"/>
    </location>
</feature>
<feature type="helix" evidence="9">
    <location>
        <begin position="473"/>
        <end position="483"/>
    </location>
</feature>
<feature type="helix" evidence="9">
    <location>
        <begin position="498"/>
        <end position="500"/>
    </location>
</feature>
<feature type="turn" evidence="9">
    <location>
        <begin position="504"/>
        <end position="508"/>
    </location>
</feature>
<feature type="helix" evidence="9">
    <location>
        <begin position="512"/>
        <end position="531"/>
    </location>
</feature>
<feature type="helix" evidence="9">
    <location>
        <begin position="547"/>
        <end position="557"/>
    </location>
</feature>
<feature type="helix" evidence="9">
    <location>
        <begin position="560"/>
        <end position="562"/>
    </location>
</feature>
<feature type="helix" evidence="9">
    <location>
        <begin position="565"/>
        <end position="572"/>
    </location>
</feature>
<feature type="helix" evidence="9">
    <location>
        <begin position="581"/>
        <end position="586"/>
    </location>
</feature>
<feature type="helix" evidence="9">
    <location>
        <begin position="588"/>
        <end position="597"/>
    </location>
</feature>
<feature type="helix" evidence="9">
    <location>
        <begin position="598"/>
        <end position="600"/>
    </location>
</feature>
<keyword id="KW-0002">3D-structure</keyword>
<keyword id="KW-0121">Carboxypeptidase</keyword>
<keyword id="KW-1003">Cell membrane</keyword>
<keyword id="KW-0966">Cell projection</keyword>
<keyword id="KW-0868">Chloride</keyword>
<keyword id="KW-0963">Cytoplasm</keyword>
<keyword id="KW-1015">Disulfide bond</keyword>
<keyword id="KW-0325">Glycoprotein</keyword>
<keyword id="KW-0378">Hydrolase</keyword>
<keyword id="KW-1017">Isopeptide bond</keyword>
<keyword id="KW-0472">Membrane</keyword>
<keyword id="KW-0479">Metal-binding</keyword>
<keyword id="KW-0482">Metalloprotease</keyword>
<keyword id="KW-0597">Phosphoprotein</keyword>
<keyword id="KW-0645">Protease</keyword>
<keyword id="KW-1185">Reference proteome</keyword>
<keyword id="KW-0964">Secreted</keyword>
<keyword id="KW-0732">Signal</keyword>
<keyword id="KW-0812">Transmembrane</keyword>
<keyword id="KW-1133">Transmembrane helix</keyword>
<keyword id="KW-0832">Ubl conjugation</keyword>
<keyword id="KW-0862">Zinc</keyword>
<dbReference type="EC" id="3.4.17.23" evidence="3"/>
<dbReference type="EC" id="3.4.17.-" evidence="3"/>
<dbReference type="EMBL" id="BT021667">
    <property type="protein sequence ID" value="AAX46514.1"/>
    <property type="molecule type" value="mRNA"/>
</dbReference>
<dbReference type="RefSeq" id="XP_005228486.1">
    <property type="nucleotide sequence ID" value="XM_005228429.3"/>
</dbReference>
<dbReference type="PDB" id="8XZ9">
    <property type="method" value="EM"/>
    <property type="resolution" value="3.37 A"/>
    <property type="chains" value="A/E=19-614"/>
</dbReference>
<dbReference type="PDB" id="9E0I">
    <property type="method" value="EM"/>
    <property type="resolution" value="2.40 A"/>
    <property type="chains" value="A=1-739"/>
</dbReference>
<dbReference type="PDBsum" id="8XZ9"/>
<dbReference type="PDBsum" id="9E0I"/>
<dbReference type="EMDB" id="EMD-38790"/>
<dbReference type="EMDB" id="EMD-47358"/>
<dbReference type="SMR" id="Q58DD0"/>
<dbReference type="BioGRID" id="165872">
    <property type="interactions" value="1"/>
</dbReference>
<dbReference type="FunCoup" id="Q58DD0">
    <property type="interactions" value="122"/>
</dbReference>
<dbReference type="IntAct" id="Q58DD0">
    <property type="interactions" value="3"/>
</dbReference>
<dbReference type="STRING" id="9913.ENSBTAP00000045721"/>
<dbReference type="BindingDB" id="Q58DD0"/>
<dbReference type="MEROPS" id="M02.006"/>
<dbReference type="GlyCosmos" id="Q58DD0">
    <property type="glycosylation" value="7 sites, No reported glycans"/>
</dbReference>
<dbReference type="GlyGen" id="Q58DD0">
    <property type="glycosylation" value="7 sites"/>
</dbReference>
<dbReference type="PaxDb" id="9913-ENSBTAP00000045721"/>
<dbReference type="Ensembl" id="ENSBTAT00000048730.5">
    <property type="protein sequence ID" value="ENSBTAP00000045721.5"/>
    <property type="gene ID" value="ENSBTAG00000034402.5"/>
</dbReference>
<dbReference type="VGNC" id="VGNC:25535">
    <property type="gene designation" value="ACE2"/>
</dbReference>
<dbReference type="eggNOG" id="KOG3690">
    <property type="taxonomic scope" value="Eukaryota"/>
</dbReference>
<dbReference type="GeneTree" id="ENSGT00940000158077"/>
<dbReference type="HOGENOM" id="CLU_014364_3_0_1"/>
<dbReference type="InParanoid" id="Q58DD0"/>
<dbReference type="OrthoDB" id="10029630at2759"/>
<dbReference type="TreeFam" id="TF312861"/>
<dbReference type="Proteomes" id="UP000009136">
    <property type="component" value="Chromosome X"/>
</dbReference>
<dbReference type="GO" id="GO:0016324">
    <property type="term" value="C:apical plasma membrane"/>
    <property type="evidence" value="ECO:0007669"/>
    <property type="project" value="UniProtKB-SubCell"/>
</dbReference>
<dbReference type="GO" id="GO:0009986">
    <property type="term" value="C:cell surface"/>
    <property type="evidence" value="ECO:0000250"/>
    <property type="project" value="UniProtKB"/>
</dbReference>
<dbReference type="GO" id="GO:0005929">
    <property type="term" value="C:cilium"/>
    <property type="evidence" value="ECO:0007669"/>
    <property type="project" value="UniProtKB-SubCell"/>
</dbReference>
<dbReference type="GO" id="GO:0005737">
    <property type="term" value="C:cytoplasm"/>
    <property type="evidence" value="ECO:0007669"/>
    <property type="project" value="UniProtKB-SubCell"/>
</dbReference>
<dbReference type="GO" id="GO:0005615">
    <property type="term" value="C:extracellular space"/>
    <property type="evidence" value="ECO:0000318"/>
    <property type="project" value="GO_Central"/>
</dbReference>
<dbReference type="GO" id="GO:0005886">
    <property type="term" value="C:plasma membrane"/>
    <property type="evidence" value="ECO:0000250"/>
    <property type="project" value="UniProtKB"/>
</dbReference>
<dbReference type="GO" id="GO:0004180">
    <property type="term" value="F:carboxypeptidase activity"/>
    <property type="evidence" value="ECO:0007669"/>
    <property type="project" value="UniProtKB-KW"/>
</dbReference>
<dbReference type="GO" id="GO:0046872">
    <property type="term" value="F:metal ion binding"/>
    <property type="evidence" value="ECO:0007669"/>
    <property type="project" value="UniProtKB-KW"/>
</dbReference>
<dbReference type="GO" id="GO:0008237">
    <property type="term" value="F:metallopeptidase activity"/>
    <property type="evidence" value="ECO:0000318"/>
    <property type="project" value="GO_Central"/>
</dbReference>
<dbReference type="GO" id="GO:0008241">
    <property type="term" value="F:peptidyl-dipeptidase activity"/>
    <property type="evidence" value="ECO:0007669"/>
    <property type="project" value="InterPro"/>
</dbReference>
<dbReference type="GO" id="GO:0001618">
    <property type="term" value="F:virus receptor activity"/>
    <property type="evidence" value="ECO:0000250"/>
    <property type="project" value="UniProtKB"/>
</dbReference>
<dbReference type="GO" id="GO:0006508">
    <property type="term" value="P:proteolysis"/>
    <property type="evidence" value="ECO:0007669"/>
    <property type="project" value="UniProtKB-KW"/>
</dbReference>
<dbReference type="CDD" id="cd06461">
    <property type="entry name" value="M2_ACE"/>
    <property type="match status" value="1"/>
</dbReference>
<dbReference type="FunFam" id="1.10.1370.30:FF:000001">
    <property type="entry name" value="Angiotensin-converting enzyme"/>
    <property type="match status" value="1"/>
</dbReference>
<dbReference type="Gene3D" id="1.10.1370.30">
    <property type="match status" value="1"/>
</dbReference>
<dbReference type="InterPro" id="IPR031588">
    <property type="entry name" value="Collectrin_dom"/>
</dbReference>
<dbReference type="InterPro" id="IPR001548">
    <property type="entry name" value="Peptidase_M2"/>
</dbReference>
<dbReference type="PANTHER" id="PTHR10514">
    <property type="entry name" value="ANGIOTENSIN-CONVERTING ENZYME"/>
    <property type="match status" value="1"/>
</dbReference>
<dbReference type="PANTHER" id="PTHR10514:SF24">
    <property type="entry name" value="ANGIOTENSIN-CONVERTING ENZYME 2"/>
    <property type="match status" value="1"/>
</dbReference>
<dbReference type="Pfam" id="PF16959">
    <property type="entry name" value="Collectrin"/>
    <property type="match status" value="1"/>
</dbReference>
<dbReference type="Pfam" id="PF01401">
    <property type="entry name" value="Peptidase_M2"/>
    <property type="match status" value="1"/>
</dbReference>
<dbReference type="PRINTS" id="PR00791">
    <property type="entry name" value="PEPDIPTASEA"/>
</dbReference>
<dbReference type="SUPFAM" id="SSF55486">
    <property type="entry name" value="Metalloproteases ('zincins'), catalytic domain"/>
    <property type="match status" value="1"/>
</dbReference>
<dbReference type="PROSITE" id="PS52010">
    <property type="entry name" value="COLLECTRIN_LIKE"/>
    <property type="match status" value="1"/>
</dbReference>
<dbReference type="PROSITE" id="PS52011">
    <property type="entry name" value="PEPTIDASE_M2"/>
    <property type="match status" value="1"/>
</dbReference>
<dbReference type="PROSITE" id="PS00142">
    <property type="entry name" value="ZINC_PROTEASE"/>
    <property type="match status" value="1"/>
</dbReference>
<protein>
    <recommendedName>
        <fullName>Angiotensin-converting enzyme 2</fullName>
        <ecNumber evidence="3">3.4.17.23</ecNumber>
    </recommendedName>
    <alternativeName>
        <fullName>ACE-related carboxypeptidase</fullName>
        <ecNumber evidence="3">3.4.17.-</ecNumber>
    </alternativeName>
    <component>
        <recommendedName>
            <fullName>Processed angiotensin-converting enzyme 2</fullName>
        </recommendedName>
    </component>
</protein>
<proteinExistence type="evidence at protein level"/>
<accession>Q58DD0</accession>
<organism>
    <name type="scientific">Bos taurus</name>
    <name type="common">Bovine</name>
    <dbReference type="NCBI Taxonomy" id="9913"/>
    <lineage>
        <taxon>Eukaryota</taxon>
        <taxon>Metazoa</taxon>
        <taxon>Chordata</taxon>
        <taxon>Craniata</taxon>
        <taxon>Vertebrata</taxon>
        <taxon>Euteleostomi</taxon>
        <taxon>Mammalia</taxon>
        <taxon>Eutheria</taxon>
        <taxon>Laurasiatheria</taxon>
        <taxon>Artiodactyla</taxon>
        <taxon>Ruminantia</taxon>
        <taxon>Pecora</taxon>
        <taxon>Bovidae</taxon>
        <taxon>Bovinae</taxon>
        <taxon>Bos</taxon>
    </lineage>
</organism>